<keyword id="KW-0963">Cytoplasm</keyword>
<keyword id="KW-0539">Nucleus</keyword>
<keyword id="KW-1185">Reference proteome</keyword>
<accession>Q9P6I6</accession>
<protein>
    <recommendedName>
        <fullName>Uncharacterized protein C1198.03c</fullName>
    </recommendedName>
</protein>
<gene>
    <name type="ORF">SPBC1198.03c</name>
</gene>
<sequence>MDIKDEKALTIEKACTINVFAPFVRNVTAEDEKAVTNKKHINSSATVHVFHGVVNRTFKTKGNTVGLPKSFSKAVIETLSYKPFAPICIHSRSDEVVNGFPLIYFPEDLASHDISGKDWKSFIHDVNMACSFSDVALMGLDQILNLVSFGLSAYVISYYVEKYVDKAKFPIIKGFIEMWNRKFFNPRKTHVYFINSDEVAEQRAVSIKAYQQGKGTKGLFSKFNAQREWKKQHQDISSTQHSRLLLISL</sequence>
<feature type="chain" id="PRO_0000304116" description="Uncharacterized protein C1198.03c">
    <location>
        <begin position="1"/>
        <end position="249"/>
    </location>
</feature>
<evidence type="ECO:0000269" key="1">
    <source>
    </source>
</evidence>
<name>YHG3_SCHPO</name>
<dbReference type="EMBL" id="CU329671">
    <property type="protein sequence ID" value="CAB91178.1"/>
    <property type="molecule type" value="Genomic_DNA"/>
</dbReference>
<dbReference type="RefSeq" id="NP_595072.1">
    <property type="nucleotide sequence ID" value="NM_001020978.2"/>
</dbReference>
<dbReference type="SMR" id="Q9P6I6"/>
<dbReference type="BioGRID" id="276580">
    <property type="interactions" value="6"/>
</dbReference>
<dbReference type="STRING" id="284812.Q9P6I6"/>
<dbReference type="iPTMnet" id="Q9P6I6"/>
<dbReference type="PaxDb" id="4896-SPBC1198.03c.1"/>
<dbReference type="EnsemblFungi" id="SPBC1198.03c.1">
    <property type="protein sequence ID" value="SPBC1198.03c.1:pep"/>
    <property type="gene ID" value="SPBC1198.03c"/>
</dbReference>
<dbReference type="KEGG" id="spo:2540041"/>
<dbReference type="PomBase" id="SPBC1198.03c"/>
<dbReference type="VEuPathDB" id="FungiDB:SPBC1198.03c"/>
<dbReference type="HOGENOM" id="CLU_1086478_0_0_1"/>
<dbReference type="InParanoid" id="Q9P6I6"/>
<dbReference type="OMA" id="MEGPCTI"/>
<dbReference type="PRO" id="PR:Q9P6I6"/>
<dbReference type="Proteomes" id="UP000002485">
    <property type="component" value="Chromosome II"/>
</dbReference>
<dbReference type="GO" id="GO:0032153">
    <property type="term" value="C:cell division site"/>
    <property type="evidence" value="ECO:0007005"/>
    <property type="project" value="PomBase"/>
</dbReference>
<dbReference type="GO" id="GO:0051286">
    <property type="term" value="C:cell tip"/>
    <property type="evidence" value="ECO:0007005"/>
    <property type="project" value="PomBase"/>
</dbReference>
<dbReference type="GO" id="GO:0005829">
    <property type="term" value="C:cytosol"/>
    <property type="evidence" value="ECO:0007005"/>
    <property type="project" value="PomBase"/>
</dbReference>
<dbReference type="GO" id="GO:0005634">
    <property type="term" value="C:nucleus"/>
    <property type="evidence" value="ECO:0007005"/>
    <property type="project" value="PomBase"/>
</dbReference>
<dbReference type="InterPro" id="IPR028018">
    <property type="entry name" value="DUF4646"/>
</dbReference>
<dbReference type="Pfam" id="PF15496">
    <property type="entry name" value="DUF4646"/>
    <property type="match status" value="1"/>
</dbReference>
<organism>
    <name type="scientific">Schizosaccharomyces pombe (strain 972 / ATCC 24843)</name>
    <name type="common">Fission yeast</name>
    <dbReference type="NCBI Taxonomy" id="284812"/>
    <lineage>
        <taxon>Eukaryota</taxon>
        <taxon>Fungi</taxon>
        <taxon>Dikarya</taxon>
        <taxon>Ascomycota</taxon>
        <taxon>Taphrinomycotina</taxon>
        <taxon>Schizosaccharomycetes</taxon>
        <taxon>Schizosaccharomycetales</taxon>
        <taxon>Schizosaccharomycetaceae</taxon>
        <taxon>Schizosaccharomyces</taxon>
    </lineage>
</organism>
<reference key="1">
    <citation type="journal article" date="2002" name="Nature">
        <title>The genome sequence of Schizosaccharomyces pombe.</title>
        <authorList>
            <person name="Wood V."/>
            <person name="Gwilliam R."/>
            <person name="Rajandream M.A."/>
            <person name="Lyne M.H."/>
            <person name="Lyne R."/>
            <person name="Stewart A."/>
            <person name="Sgouros J.G."/>
            <person name="Peat N."/>
            <person name="Hayles J."/>
            <person name="Baker S.G."/>
            <person name="Basham D."/>
            <person name="Bowman S."/>
            <person name="Brooks K."/>
            <person name="Brown D."/>
            <person name="Brown S."/>
            <person name="Chillingworth T."/>
            <person name="Churcher C.M."/>
            <person name="Collins M."/>
            <person name="Connor R."/>
            <person name="Cronin A."/>
            <person name="Davis P."/>
            <person name="Feltwell T."/>
            <person name="Fraser A."/>
            <person name="Gentles S."/>
            <person name="Goble A."/>
            <person name="Hamlin N."/>
            <person name="Harris D.E."/>
            <person name="Hidalgo J."/>
            <person name="Hodgson G."/>
            <person name="Holroyd S."/>
            <person name="Hornsby T."/>
            <person name="Howarth S."/>
            <person name="Huckle E.J."/>
            <person name="Hunt S."/>
            <person name="Jagels K."/>
            <person name="James K.D."/>
            <person name="Jones L."/>
            <person name="Jones M."/>
            <person name="Leather S."/>
            <person name="McDonald S."/>
            <person name="McLean J."/>
            <person name="Mooney P."/>
            <person name="Moule S."/>
            <person name="Mungall K.L."/>
            <person name="Murphy L.D."/>
            <person name="Niblett D."/>
            <person name="Odell C."/>
            <person name="Oliver K."/>
            <person name="O'Neil S."/>
            <person name="Pearson D."/>
            <person name="Quail M.A."/>
            <person name="Rabbinowitsch E."/>
            <person name="Rutherford K.M."/>
            <person name="Rutter S."/>
            <person name="Saunders D."/>
            <person name="Seeger K."/>
            <person name="Sharp S."/>
            <person name="Skelton J."/>
            <person name="Simmonds M.N."/>
            <person name="Squares R."/>
            <person name="Squares S."/>
            <person name="Stevens K."/>
            <person name="Taylor K."/>
            <person name="Taylor R.G."/>
            <person name="Tivey A."/>
            <person name="Walsh S.V."/>
            <person name="Warren T."/>
            <person name="Whitehead S."/>
            <person name="Woodward J.R."/>
            <person name="Volckaert G."/>
            <person name="Aert R."/>
            <person name="Robben J."/>
            <person name="Grymonprez B."/>
            <person name="Weltjens I."/>
            <person name="Vanstreels E."/>
            <person name="Rieger M."/>
            <person name="Schaefer M."/>
            <person name="Mueller-Auer S."/>
            <person name="Gabel C."/>
            <person name="Fuchs M."/>
            <person name="Duesterhoeft A."/>
            <person name="Fritzc C."/>
            <person name="Holzer E."/>
            <person name="Moestl D."/>
            <person name="Hilbert H."/>
            <person name="Borzym K."/>
            <person name="Langer I."/>
            <person name="Beck A."/>
            <person name="Lehrach H."/>
            <person name="Reinhardt R."/>
            <person name="Pohl T.M."/>
            <person name="Eger P."/>
            <person name="Zimmermann W."/>
            <person name="Wedler H."/>
            <person name="Wambutt R."/>
            <person name="Purnelle B."/>
            <person name="Goffeau A."/>
            <person name="Cadieu E."/>
            <person name="Dreano S."/>
            <person name="Gloux S."/>
            <person name="Lelaure V."/>
            <person name="Mottier S."/>
            <person name="Galibert F."/>
            <person name="Aves S.J."/>
            <person name="Xiang Z."/>
            <person name="Hunt C."/>
            <person name="Moore K."/>
            <person name="Hurst S.M."/>
            <person name="Lucas M."/>
            <person name="Rochet M."/>
            <person name="Gaillardin C."/>
            <person name="Tallada V.A."/>
            <person name="Garzon A."/>
            <person name="Thode G."/>
            <person name="Daga R.R."/>
            <person name="Cruzado L."/>
            <person name="Jimenez J."/>
            <person name="Sanchez M."/>
            <person name="del Rey F."/>
            <person name="Benito J."/>
            <person name="Dominguez A."/>
            <person name="Revuelta J.L."/>
            <person name="Moreno S."/>
            <person name="Armstrong J."/>
            <person name="Forsburg S.L."/>
            <person name="Cerutti L."/>
            <person name="Lowe T."/>
            <person name="McCombie W.R."/>
            <person name="Paulsen I."/>
            <person name="Potashkin J."/>
            <person name="Shpakovski G.V."/>
            <person name="Ussery D."/>
            <person name="Barrell B.G."/>
            <person name="Nurse P."/>
        </authorList>
    </citation>
    <scope>NUCLEOTIDE SEQUENCE [LARGE SCALE GENOMIC DNA]</scope>
    <source>
        <strain>972 / ATCC 24843</strain>
    </source>
</reference>
<reference key="2">
    <citation type="journal article" date="2006" name="Nat. Biotechnol.">
        <title>ORFeome cloning and global analysis of protein localization in the fission yeast Schizosaccharomyces pombe.</title>
        <authorList>
            <person name="Matsuyama A."/>
            <person name="Arai R."/>
            <person name="Yashiroda Y."/>
            <person name="Shirai A."/>
            <person name="Kamata A."/>
            <person name="Sekido S."/>
            <person name="Kobayashi Y."/>
            <person name="Hashimoto A."/>
            <person name="Hamamoto M."/>
            <person name="Hiraoka Y."/>
            <person name="Horinouchi S."/>
            <person name="Yoshida M."/>
        </authorList>
    </citation>
    <scope>SUBCELLULAR LOCATION [LARGE SCALE ANALYSIS]</scope>
</reference>
<comment type="subcellular location">
    <subcellularLocation>
        <location evidence="1">Cytoplasm</location>
    </subcellularLocation>
    <subcellularLocation>
        <location evidence="1">Nucleus</location>
    </subcellularLocation>
    <text>Localizes at the cell tip and the barrier septum.</text>
</comment>
<proteinExistence type="predicted"/>